<keyword id="KW-0007">Acetylation</keyword>
<keyword id="KW-0058">Aromatic hydrocarbons catabolism</keyword>
<keyword id="KW-0963">Cytoplasm</keyword>
<keyword id="KW-0216">Detoxification</keyword>
<keyword id="KW-0378">Hydrolase</keyword>
<keyword id="KW-0443">Lipid metabolism</keyword>
<keyword id="KW-0449">Lipoprotein</keyword>
<keyword id="KW-0460">Magnesium</keyword>
<keyword id="KW-0479">Metal-binding</keyword>
<keyword id="KW-0511">Multifunctional enzyme</keyword>
<keyword id="KW-0576">Peroxisome</keyword>
<keyword id="KW-0597">Phosphoprotein</keyword>
<keyword id="KW-1185">Reference proteome</keyword>
<accession>Q6Q2C2</accession>
<protein>
    <recommendedName>
        <fullName>Bifunctional epoxide hydrolase 2</fullName>
    </recommendedName>
    <domain>
        <recommendedName>
            <fullName>Cytosolic epoxide hydrolase 2</fullName>
            <shortName>CEH</shortName>
            <ecNumber evidence="2">3.3.2.10</ecNumber>
        </recommendedName>
        <alternativeName>
            <fullName>Epoxide hydratase</fullName>
        </alternativeName>
        <alternativeName>
            <fullName>Soluble epoxide hydrolase</fullName>
            <shortName>SEH</shortName>
        </alternativeName>
    </domain>
    <domain>
        <recommendedName>
            <fullName>Lipid-phosphate phosphatase</fullName>
            <ecNumber evidence="2">3.1.3.76</ecNumber>
        </recommendedName>
    </domain>
</protein>
<organism>
    <name type="scientific">Sus scrofa</name>
    <name type="common">Pig</name>
    <dbReference type="NCBI Taxonomy" id="9823"/>
    <lineage>
        <taxon>Eukaryota</taxon>
        <taxon>Metazoa</taxon>
        <taxon>Chordata</taxon>
        <taxon>Craniata</taxon>
        <taxon>Vertebrata</taxon>
        <taxon>Euteleostomi</taxon>
        <taxon>Mammalia</taxon>
        <taxon>Eutheria</taxon>
        <taxon>Laurasiatheria</taxon>
        <taxon>Artiodactyla</taxon>
        <taxon>Suina</taxon>
        <taxon>Suidae</taxon>
        <taxon>Sus</taxon>
    </lineage>
</organism>
<feature type="chain" id="PRO_0000084113" description="Bifunctional epoxide hydrolase 2">
    <location>
        <begin position="1"/>
        <end position="555"/>
    </location>
</feature>
<feature type="domain" description="AB hydrolase-1" evidence="5">
    <location>
        <begin position="259"/>
        <end position="531"/>
    </location>
</feature>
<feature type="region of interest" description="Phosphatase">
    <location>
        <begin position="1"/>
        <end position="224"/>
    </location>
</feature>
<feature type="region of interest" description="Epoxide hydrolase">
    <location>
        <begin position="235"/>
        <end position="555"/>
    </location>
</feature>
<feature type="short sequence motif" description="Microbody targeting signal" evidence="5">
    <location>
        <begin position="553"/>
        <end position="555"/>
    </location>
</feature>
<feature type="active site" description="Nucleophile" evidence="2">
    <location>
        <position position="335"/>
    </location>
</feature>
<feature type="active site" description="Proton donor" evidence="2">
    <location>
        <position position="466"/>
    </location>
</feature>
<feature type="active site" description="Proton acceptor" evidence="2">
    <location>
        <position position="524"/>
    </location>
</feature>
<feature type="binding site" evidence="2">
    <location>
        <position position="9"/>
    </location>
    <ligand>
        <name>Mg(2+)</name>
        <dbReference type="ChEBI" id="CHEBI:18420"/>
    </ligand>
</feature>
<feature type="binding site" evidence="2">
    <location>
        <position position="11"/>
    </location>
    <ligand>
        <name>Mg(2+)</name>
        <dbReference type="ChEBI" id="CHEBI:18420"/>
    </ligand>
</feature>
<feature type="binding site" evidence="2">
    <location>
        <begin position="123"/>
        <end position="124"/>
    </location>
    <ligand>
        <name>phosphate</name>
        <dbReference type="ChEBI" id="CHEBI:43474"/>
    </ligand>
</feature>
<feature type="binding site" evidence="2">
    <location>
        <position position="185"/>
    </location>
    <ligand>
        <name>Mg(2+)</name>
        <dbReference type="ChEBI" id="CHEBI:18420"/>
    </ligand>
</feature>
<feature type="binding site" evidence="2">
    <location>
        <position position="383"/>
    </location>
    <ligand>
        <name>substrate</name>
    </ligand>
</feature>
<feature type="modified residue" description="N6-acetyllysine" evidence="2">
    <location>
        <position position="43"/>
    </location>
</feature>
<feature type="modified residue" description="N6-acetyllysine" evidence="3">
    <location>
        <position position="191"/>
    </location>
</feature>
<feature type="modified residue" description="N6-acetyllysine" evidence="3">
    <location>
        <position position="215"/>
    </location>
</feature>
<feature type="modified residue" description="Phosphoserine" evidence="3">
    <location>
        <position position="370"/>
    </location>
</feature>
<feature type="modified residue" description="N6-succinyllysine" evidence="3">
    <location>
        <position position="455"/>
    </location>
</feature>
<feature type="modified residue" description="N6-succinyllysine" evidence="3">
    <location>
        <position position="505"/>
    </location>
</feature>
<feature type="modified residue" description="N6-succinyllysine" evidence="3">
    <location>
        <position position="554"/>
    </location>
</feature>
<feature type="lipid moiety-binding region" description="S-(15-deoxy-Delta12,14-prostaglandin J2-9-yl)cysteine" evidence="1">
    <location>
        <position position="522"/>
    </location>
</feature>
<dbReference type="EC" id="3.3.2.10" evidence="2"/>
<dbReference type="EC" id="3.1.3.76" evidence="2"/>
<dbReference type="EMBL" id="AY566232">
    <property type="protein sequence ID" value="AAS68016.1"/>
    <property type="molecule type" value="mRNA"/>
</dbReference>
<dbReference type="RefSeq" id="NP_001001641.1">
    <property type="nucleotide sequence ID" value="NM_001001641.1"/>
</dbReference>
<dbReference type="SMR" id="Q6Q2C2"/>
<dbReference type="FunCoup" id="Q6Q2C2">
    <property type="interactions" value="534"/>
</dbReference>
<dbReference type="STRING" id="9823.ENSSSCP00000040448"/>
<dbReference type="BindingDB" id="Q6Q2C2"/>
<dbReference type="ESTHER" id="pig-q6q2c2">
    <property type="family name" value="Epoxide_hydrolase"/>
</dbReference>
<dbReference type="MEROPS" id="S33.973"/>
<dbReference type="PaxDb" id="9823-ENSSSCP00000010323"/>
<dbReference type="PeptideAtlas" id="Q6Q2C2"/>
<dbReference type="Ensembl" id="ENSSSCT00070046106.1">
    <property type="protein sequence ID" value="ENSSSCP00070038885.1"/>
    <property type="gene ID" value="ENSSSCG00070023132.1"/>
</dbReference>
<dbReference type="GeneID" id="414425"/>
<dbReference type="KEGG" id="ssc:414425"/>
<dbReference type="CTD" id="2053"/>
<dbReference type="eggNOG" id="KOG3085">
    <property type="taxonomic scope" value="Eukaryota"/>
</dbReference>
<dbReference type="eggNOG" id="KOG4178">
    <property type="taxonomic scope" value="Eukaryota"/>
</dbReference>
<dbReference type="InParanoid" id="Q6Q2C2"/>
<dbReference type="OrthoDB" id="408373at2759"/>
<dbReference type="Reactome" id="R-SSC-2142670">
    <property type="pathway name" value="Synthesis of epoxy (EET) and dihydroxyeicosatrienoic acids (DHET)"/>
</dbReference>
<dbReference type="Reactome" id="R-SSC-9018682">
    <property type="pathway name" value="Biosynthesis of maresins"/>
</dbReference>
<dbReference type="Reactome" id="R-SSC-9033241">
    <property type="pathway name" value="Peroxisomal protein import"/>
</dbReference>
<dbReference type="Proteomes" id="UP000008227">
    <property type="component" value="Unplaced"/>
</dbReference>
<dbReference type="Proteomes" id="UP000314985">
    <property type="component" value="Chromosome 14"/>
</dbReference>
<dbReference type="Proteomes" id="UP000694570">
    <property type="component" value="Unplaced"/>
</dbReference>
<dbReference type="Proteomes" id="UP000694571">
    <property type="component" value="Unplaced"/>
</dbReference>
<dbReference type="Proteomes" id="UP000694720">
    <property type="component" value="Unplaced"/>
</dbReference>
<dbReference type="Proteomes" id="UP000694722">
    <property type="component" value="Unplaced"/>
</dbReference>
<dbReference type="Proteomes" id="UP000694723">
    <property type="component" value="Unplaced"/>
</dbReference>
<dbReference type="Proteomes" id="UP000694724">
    <property type="component" value="Unplaced"/>
</dbReference>
<dbReference type="Proteomes" id="UP000694725">
    <property type="component" value="Unplaced"/>
</dbReference>
<dbReference type="Proteomes" id="UP000694726">
    <property type="component" value="Unplaced"/>
</dbReference>
<dbReference type="Proteomes" id="UP000694727">
    <property type="component" value="Unplaced"/>
</dbReference>
<dbReference type="Proteomes" id="UP000694728">
    <property type="component" value="Unplaced"/>
</dbReference>
<dbReference type="GO" id="GO:0005777">
    <property type="term" value="C:peroxisome"/>
    <property type="evidence" value="ECO:0000318"/>
    <property type="project" value="GO_Central"/>
</dbReference>
<dbReference type="GO" id="GO:0033885">
    <property type="term" value="F:10-hydroxy-9-(phosphonooxy)octadecanoate phosphatase activity"/>
    <property type="evidence" value="ECO:0007669"/>
    <property type="project" value="UniProtKB-EC"/>
</dbReference>
<dbReference type="GO" id="GO:0004301">
    <property type="term" value="F:epoxide hydrolase activity"/>
    <property type="evidence" value="ECO:0007669"/>
    <property type="project" value="UniProtKB-EC"/>
</dbReference>
<dbReference type="GO" id="GO:0042577">
    <property type="term" value="F:lipid phosphatase activity"/>
    <property type="evidence" value="ECO:0000250"/>
    <property type="project" value="UniProtKB"/>
</dbReference>
<dbReference type="GO" id="GO:0000287">
    <property type="term" value="F:magnesium ion binding"/>
    <property type="evidence" value="ECO:0000250"/>
    <property type="project" value="UniProtKB"/>
</dbReference>
<dbReference type="GO" id="GO:0009056">
    <property type="term" value="P:catabolic process"/>
    <property type="evidence" value="ECO:0007669"/>
    <property type="project" value="UniProtKB-KW"/>
</dbReference>
<dbReference type="GO" id="GO:0042632">
    <property type="term" value="P:cholesterol homeostasis"/>
    <property type="evidence" value="ECO:0000318"/>
    <property type="project" value="GO_Central"/>
</dbReference>
<dbReference type="GO" id="GO:0046839">
    <property type="term" value="P:phospholipid dephosphorylation"/>
    <property type="evidence" value="ECO:0000250"/>
    <property type="project" value="UniProtKB"/>
</dbReference>
<dbReference type="GO" id="GO:0009636">
    <property type="term" value="P:response to toxic substance"/>
    <property type="evidence" value="ECO:0007669"/>
    <property type="project" value="UniProtKB-KW"/>
</dbReference>
<dbReference type="CDD" id="cd02603">
    <property type="entry name" value="HAD_sEH-N_like"/>
    <property type="match status" value="1"/>
</dbReference>
<dbReference type="FunFam" id="1.10.150.240:FF:000011">
    <property type="entry name" value="Bifunctional epoxide hydrolase 2"/>
    <property type="match status" value="1"/>
</dbReference>
<dbReference type="FunFam" id="3.40.50.1820:FF:000067">
    <property type="entry name" value="Bifunctional epoxide hydrolase 2"/>
    <property type="match status" value="1"/>
</dbReference>
<dbReference type="Gene3D" id="3.40.50.1820">
    <property type="entry name" value="alpha/beta hydrolase"/>
    <property type="match status" value="1"/>
</dbReference>
<dbReference type="Gene3D" id="3.40.50.1000">
    <property type="entry name" value="HAD superfamily/HAD-like"/>
    <property type="match status" value="1"/>
</dbReference>
<dbReference type="Gene3D" id="1.10.150.240">
    <property type="entry name" value="Putative phosphatase, domain 2"/>
    <property type="match status" value="1"/>
</dbReference>
<dbReference type="InterPro" id="IPR000073">
    <property type="entry name" value="AB_hydrolase_1"/>
</dbReference>
<dbReference type="InterPro" id="IPR029058">
    <property type="entry name" value="AB_hydrolase_fold"/>
</dbReference>
<dbReference type="InterPro" id="IPR000639">
    <property type="entry name" value="Epox_hydrolase-like"/>
</dbReference>
<dbReference type="InterPro" id="IPR036412">
    <property type="entry name" value="HAD-like_sf"/>
</dbReference>
<dbReference type="InterPro" id="IPR006439">
    <property type="entry name" value="HAD-SF_hydro_IA"/>
</dbReference>
<dbReference type="InterPro" id="IPR011945">
    <property type="entry name" value="HAD-SF_ppase_IA/epoxid_hydro_N"/>
</dbReference>
<dbReference type="InterPro" id="IPR023214">
    <property type="entry name" value="HAD_sf"/>
</dbReference>
<dbReference type="InterPro" id="IPR023198">
    <property type="entry name" value="PGP-like_dom2"/>
</dbReference>
<dbReference type="NCBIfam" id="TIGR02247">
    <property type="entry name" value="HAD-1A3-hyp"/>
    <property type="match status" value="1"/>
</dbReference>
<dbReference type="NCBIfam" id="TIGR01509">
    <property type="entry name" value="HAD-SF-IA-v3"/>
    <property type="match status" value="1"/>
</dbReference>
<dbReference type="PANTHER" id="PTHR43329">
    <property type="entry name" value="EPOXIDE HYDROLASE"/>
    <property type="match status" value="1"/>
</dbReference>
<dbReference type="Pfam" id="PF00561">
    <property type="entry name" value="Abhydrolase_1"/>
    <property type="match status" value="1"/>
</dbReference>
<dbReference type="Pfam" id="PF00702">
    <property type="entry name" value="Hydrolase"/>
    <property type="match status" value="1"/>
</dbReference>
<dbReference type="PRINTS" id="PR00111">
    <property type="entry name" value="ABHYDROLASE"/>
</dbReference>
<dbReference type="PRINTS" id="PR00412">
    <property type="entry name" value="EPOXHYDRLASE"/>
</dbReference>
<dbReference type="SFLD" id="SFLDG01129">
    <property type="entry name" value="C1.5:_HAD__Beta-PGM__Phosphata"/>
    <property type="match status" value="1"/>
</dbReference>
<dbReference type="SFLD" id="SFLDS00003">
    <property type="entry name" value="Haloacid_Dehalogenase"/>
    <property type="match status" value="1"/>
</dbReference>
<dbReference type="SUPFAM" id="SSF53474">
    <property type="entry name" value="alpha/beta-Hydrolases"/>
    <property type="match status" value="1"/>
</dbReference>
<dbReference type="SUPFAM" id="SSF56784">
    <property type="entry name" value="HAD-like"/>
    <property type="match status" value="1"/>
</dbReference>
<sequence>MALRAAVFDLDGVLALPSITTSWARAEEKLALPRGFLNEAFKKGGQDGSVARVMTGEITFSQWVPFMEEDCRKCAEDSGIRLPENFSVKHIFDKALSEKKINYPMLQAALTLKKKGFSTCILTNNWLDDSAQRGSRAQLMCELRPHFDFLIESCRVGMAKPDPQIYKLMLDTLKAEPNEVVFLDDVGTHLKPVRDLGMATILVRDTDTALRELEKVTGVQLLQTPALPPTSCDPSALSHGYVLIKPGVRLHFVEMGSGPAVCLCHGFPESWFSWRYQIPALAQAGFRVLAVDMKGYGESSAPPEIEEYSLEVLCKDMVTFLNKLGLSQAVFIGHDWGGVLVWNMALFYPERVRAVASLNTPFMPSNPNVSPMEIIKANPVFDYQLYFQEPGVAEAELEQNLDRTFKNFFRAHDETFLTTNRVRELGGLFVGTPEEPSLSRLVTEEDIQFYVQQFKKSGFRGPLNWYRNMERNWQWGCKGSGRKILIPALMVTAENDLVLHPKMSKHMENWIPHLKRGHIKDCGHWTQIDKPAELNRILIEWLETDARNPLVDSKL</sequence>
<reference key="1">
    <citation type="journal article" date="2004" name="Endocrinology">
        <title>Cytochrome p450-dependent lipid metabolism in preovulatory follicles.</title>
        <authorList>
            <person name="Newman J.W."/>
            <person name="Stok J.E."/>
            <person name="Vidal J.D."/>
            <person name="Corbin C.J."/>
            <person name="Huang Q."/>
            <person name="Hammock B.D."/>
            <person name="Conley A.J."/>
        </authorList>
    </citation>
    <scope>NUCLEOTIDE SEQUENCE [MRNA]</scope>
    <scope>FUNCTION</scope>
    <source>
        <tissue>Ovary</tissue>
    </source>
</reference>
<evidence type="ECO:0000250" key="1"/>
<evidence type="ECO:0000250" key="2">
    <source>
        <dbReference type="UniProtKB" id="P34913"/>
    </source>
</evidence>
<evidence type="ECO:0000250" key="3">
    <source>
        <dbReference type="UniProtKB" id="P34914"/>
    </source>
</evidence>
<evidence type="ECO:0000250" key="4">
    <source>
        <dbReference type="UniProtKB" id="P80299"/>
    </source>
</evidence>
<evidence type="ECO:0000255" key="5"/>
<evidence type="ECO:0000305" key="6"/>
<evidence type="ECO:0000305" key="7">
    <source>
    </source>
</evidence>
<gene>
    <name type="primary">EPHX2</name>
</gene>
<proteinExistence type="evidence at transcript level"/>
<comment type="function">
    <text evidence="2 4 7">Bifunctional enzyme. The C-terminal domain has epoxide hydrolase activity and acts on epoxides (alkene oxides, oxiranes) and arene oxides. Plays a role in xenobiotic metabolism by degrading potentially toxic epoxides (By similarity). Also determines steady-state levels of physiological mediators (PubMed:15308618). The N-terminal domain has lipid phosphatase activity, with the highest activity towards threo-9,10-phosphonooxy-hydroxy-octadecanoic acid, followed by erythro-9,10-phosphonooxy-hydroxy-octadecanoic acid, 12-phosphonooxy-octadec-9Z-enoic acid and 12-phosphonooxy-octadec-9E-enoic acid (By similarity).</text>
</comment>
<comment type="catalytic activity">
    <reaction evidence="2">
        <text>an epoxide + H2O = an ethanediol</text>
        <dbReference type="Rhea" id="RHEA:19037"/>
        <dbReference type="ChEBI" id="CHEBI:15377"/>
        <dbReference type="ChEBI" id="CHEBI:32955"/>
        <dbReference type="ChEBI" id="CHEBI:140594"/>
        <dbReference type="EC" id="3.3.2.10"/>
    </reaction>
</comment>
<comment type="catalytic activity">
    <reaction evidence="2">
        <text>(9S,10S)-10-hydroxy-9-(phosphooxy)octadecanoate + H2O = (9S,10S)-9,10-dihydroxyoctadecanoate + phosphate</text>
        <dbReference type="Rhea" id="RHEA:16537"/>
        <dbReference type="ChEBI" id="CHEBI:15377"/>
        <dbReference type="ChEBI" id="CHEBI:43474"/>
        <dbReference type="ChEBI" id="CHEBI:58796"/>
        <dbReference type="ChEBI" id="CHEBI:58797"/>
        <dbReference type="EC" id="3.1.3.76"/>
    </reaction>
</comment>
<comment type="catalytic activity">
    <reaction evidence="3">
        <text>(14R,15S)-epoxy-(5Z,8Z,11Z)-eicosatrienoate + H2O = (14R,15R)-dihydroxy-(5Z,8Z,11Z)-eicosatrienoate</text>
        <dbReference type="Rhea" id="RHEA:53976"/>
        <dbReference type="ChEBI" id="CHEBI:15377"/>
        <dbReference type="ChEBI" id="CHEBI:131965"/>
        <dbReference type="ChEBI" id="CHEBI:138003"/>
    </reaction>
    <physiologicalReaction direction="left-to-right" evidence="3">
        <dbReference type="Rhea" id="RHEA:53977"/>
    </physiologicalReaction>
</comment>
<comment type="cofactor">
    <cofactor evidence="2">
        <name>Mg(2+)</name>
        <dbReference type="ChEBI" id="CHEBI:18420"/>
    </cofactor>
</comment>
<comment type="activity regulation">
    <text evidence="2">Inhibited by 1-(1-acetylpiperidin-4-yl)-3-(4-(trifl uoromethoxy)phenyl)urea (TPAU), 1-cyclohexyl-3-dodecylurea (CDU), 12-(3-adamantan-1-yl-ureido)-dodecanoic acid (AUDA), 1-((3S, 5S, 7S)-adamantan-1-yl)-3-(5-(2-(2-ethoxyethoxy) ethoxy)pentyl)urea (AEPU), N-adamantyl-N[']-cyclohexyl urea (ACU), 4-(((1S, 4S)-4-(3-((3S, 5S, 7S)-adamantan-1-yl) ureido)cyclohexyl)oxy)benzoic acid (c-AUCB), 4-(((1R, 4R)-4-(3-((3S, 5S, 7S)-adamantan-1-yl)ureido)cyclohexyl)oxy)benzoic acid (t-AUCB), 4-(((1R, 4R)-4-(3-(4(trifluoromethoxy)phenyl)ureido)cyclohexyl)oxy)benzoic acid (t-TAUCB) and to a lesser extent by 8-(3-((3S, 5S, 7S)-adamantan-1-yl)ureido) octanoic acid (AUOA).</text>
</comment>
<comment type="subunit">
    <text evidence="2">Homodimer.</text>
</comment>
<comment type="subcellular location">
    <subcellularLocation>
        <location evidence="1">Cytoplasm</location>
    </subcellularLocation>
    <subcellularLocation>
        <location evidence="1">Peroxisome</location>
    </subcellularLocation>
</comment>
<comment type="domain">
    <text>The N-terminal domain has phosphatase activity. The C-terminal domain has epoxide hydrolase activity.</text>
</comment>
<comment type="PTM">
    <text evidence="1">The covalent modification of cysteine by 15-deoxy-Delta12,14-prostaglandin-J2 is autocatalytic and reversible. It may occur as an alternative to other cysteine modifications, such as S-nitrosylation and S-palmitoylation (By similarity).</text>
</comment>
<comment type="similarity">
    <text evidence="6">Belongs to the AB hydrolase superfamily. Epoxide hydrolase family.</text>
</comment>
<name>HYES_PIG</name>